<sequence length="216" mass="25235">MGGFLVLNSSNNVVRTVPSKKRKHPEYKSKIRELISGIRSDNLREAVRLPQGVDINEWFAMNTVDFFNQISLLYATLEEFCTQTTCPVMNAGRYEYRWADGTTITKPKTVSAPKYVEYLIDWVETEIDNEAIFPKNPGEPFPPNFEDFVKRILRKLFRVYAHIYYSHFHEIVALNEQAHLNTCFKHFLLFVSEFQLVDKEKEMAPIKSLVETMLDQ</sequence>
<feature type="chain" id="PRO_0000432419" description="MOB kinase activator-like 2A">
    <location>
        <begin position="1"/>
        <end position="216"/>
    </location>
</feature>
<feature type="binding site" evidence="1">
    <location>
        <position position="81"/>
    </location>
    <ligand>
        <name>Zn(2+)</name>
        <dbReference type="ChEBI" id="CHEBI:29105"/>
    </ligand>
</feature>
<feature type="binding site" evidence="1">
    <location>
        <position position="86"/>
    </location>
    <ligand>
        <name>Zn(2+)</name>
        <dbReference type="ChEBI" id="CHEBI:29105"/>
    </ligand>
</feature>
<feature type="binding site" evidence="1">
    <location>
        <position position="162"/>
    </location>
    <ligand>
        <name>Zn(2+)</name>
        <dbReference type="ChEBI" id="CHEBI:29105"/>
    </ligand>
</feature>
<feature type="binding site" evidence="1">
    <location>
        <position position="167"/>
    </location>
    <ligand>
        <name>Zn(2+)</name>
        <dbReference type="ChEBI" id="CHEBI:29105"/>
    </ligand>
</feature>
<name>MOB2A_ARATH</name>
<dbReference type="EMBL" id="AF296833">
    <property type="status" value="NOT_ANNOTATED_CDS"/>
    <property type="molecule type" value="Genomic_DNA"/>
</dbReference>
<dbReference type="EMBL" id="CP002688">
    <property type="protein sequence ID" value="AED92843.1"/>
    <property type="molecule type" value="Genomic_DNA"/>
</dbReference>
<dbReference type="EMBL" id="BT012010">
    <property type="status" value="NOT_ANNOTATED_CDS"/>
    <property type="molecule type" value="mRNA"/>
</dbReference>
<dbReference type="RefSeq" id="NP_197544.3">
    <property type="nucleotide sequence ID" value="NM_122051.5"/>
</dbReference>
<dbReference type="SMR" id="F4K495"/>
<dbReference type="FunCoup" id="F4K495">
    <property type="interactions" value="58"/>
</dbReference>
<dbReference type="STRING" id="3702.F4K495"/>
<dbReference type="PaxDb" id="3702-AT5G20440.1"/>
<dbReference type="DNASU" id="832166"/>
<dbReference type="EnsemblPlants" id="AT5G20440.1">
    <property type="protein sequence ID" value="AT5G20440.1"/>
    <property type="gene ID" value="AT5G20440"/>
</dbReference>
<dbReference type="GeneID" id="832166"/>
<dbReference type="Gramene" id="AT5G20440.1">
    <property type="protein sequence ID" value="AT5G20440.1"/>
    <property type="gene ID" value="AT5G20440"/>
</dbReference>
<dbReference type="KEGG" id="ath:AT5G20440"/>
<dbReference type="Araport" id="AT5G20440"/>
<dbReference type="TAIR" id="AT5G20440">
    <property type="gene designation" value="MOB1D"/>
</dbReference>
<dbReference type="eggNOG" id="KOG0440">
    <property type="taxonomic scope" value="Eukaryota"/>
</dbReference>
<dbReference type="HOGENOM" id="CLU_038321_3_2_1"/>
<dbReference type="InParanoid" id="F4K495"/>
<dbReference type="OMA" id="KEMEPME"/>
<dbReference type="PhylomeDB" id="F4K495"/>
<dbReference type="PRO" id="PR:F4K495"/>
<dbReference type="Proteomes" id="UP000006548">
    <property type="component" value="Chromosome 5"/>
</dbReference>
<dbReference type="ExpressionAtlas" id="F4K495">
    <property type="expression patterns" value="differential"/>
</dbReference>
<dbReference type="GO" id="GO:0005634">
    <property type="term" value="C:nucleus"/>
    <property type="evidence" value="ECO:0007005"/>
    <property type="project" value="TAIR"/>
</dbReference>
<dbReference type="GO" id="GO:0046872">
    <property type="term" value="F:metal ion binding"/>
    <property type="evidence" value="ECO:0007669"/>
    <property type="project" value="UniProtKB-KW"/>
</dbReference>
<dbReference type="FunFam" id="1.20.140.30:FF:000001">
    <property type="entry name" value="MOB kinase activator 1A"/>
    <property type="match status" value="1"/>
</dbReference>
<dbReference type="Gene3D" id="1.20.140.30">
    <property type="entry name" value="MOB kinase activator"/>
    <property type="match status" value="1"/>
</dbReference>
<dbReference type="InterPro" id="IPR005301">
    <property type="entry name" value="MOB_kinase_act_fam"/>
</dbReference>
<dbReference type="InterPro" id="IPR036703">
    <property type="entry name" value="MOB_kinase_act_sf"/>
</dbReference>
<dbReference type="PANTHER" id="PTHR22599">
    <property type="entry name" value="MPS ONE BINDER KINASE ACTIVATOR-LIKE MOB"/>
    <property type="match status" value="1"/>
</dbReference>
<dbReference type="Pfam" id="PF03637">
    <property type="entry name" value="Mob1_phocein"/>
    <property type="match status" value="1"/>
</dbReference>
<dbReference type="SMART" id="SM01388">
    <property type="entry name" value="Mob1_phocein"/>
    <property type="match status" value="1"/>
</dbReference>
<dbReference type="SUPFAM" id="SSF101152">
    <property type="entry name" value="Mob1/phocein"/>
    <property type="match status" value="1"/>
</dbReference>
<reference key="1">
    <citation type="journal article" date="2000" name="Nature">
        <title>Sequence and analysis of chromosome 5 of the plant Arabidopsis thaliana.</title>
        <authorList>
            <person name="Tabata S."/>
            <person name="Kaneko T."/>
            <person name="Nakamura Y."/>
            <person name="Kotani H."/>
            <person name="Kato T."/>
            <person name="Asamizu E."/>
            <person name="Miyajima N."/>
            <person name="Sasamoto S."/>
            <person name="Kimura T."/>
            <person name="Hosouchi T."/>
            <person name="Kawashima K."/>
            <person name="Kohara M."/>
            <person name="Matsumoto M."/>
            <person name="Matsuno A."/>
            <person name="Muraki A."/>
            <person name="Nakayama S."/>
            <person name="Nakazaki N."/>
            <person name="Naruo K."/>
            <person name="Okumura S."/>
            <person name="Shinpo S."/>
            <person name="Takeuchi C."/>
            <person name="Wada T."/>
            <person name="Watanabe A."/>
            <person name="Yamada M."/>
            <person name="Yasuda M."/>
            <person name="Sato S."/>
            <person name="de la Bastide M."/>
            <person name="Huang E."/>
            <person name="Spiegel L."/>
            <person name="Gnoj L."/>
            <person name="O'Shaughnessy A."/>
            <person name="Preston R."/>
            <person name="Habermann K."/>
            <person name="Murray J."/>
            <person name="Johnson D."/>
            <person name="Rohlfing T."/>
            <person name="Nelson J."/>
            <person name="Stoneking T."/>
            <person name="Pepin K."/>
            <person name="Spieth J."/>
            <person name="Sekhon M."/>
            <person name="Armstrong J."/>
            <person name="Becker M."/>
            <person name="Belter E."/>
            <person name="Cordum H."/>
            <person name="Cordes M."/>
            <person name="Courtney L."/>
            <person name="Courtney W."/>
            <person name="Dante M."/>
            <person name="Du H."/>
            <person name="Edwards J."/>
            <person name="Fryman J."/>
            <person name="Haakensen B."/>
            <person name="Lamar E."/>
            <person name="Latreille P."/>
            <person name="Leonard S."/>
            <person name="Meyer R."/>
            <person name="Mulvaney E."/>
            <person name="Ozersky P."/>
            <person name="Riley A."/>
            <person name="Strowmatt C."/>
            <person name="Wagner-McPherson C."/>
            <person name="Wollam A."/>
            <person name="Yoakum M."/>
            <person name="Bell M."/>
            <person name="Dedhia N."/>
            <person name="Parnell L."/>
            <person name="Shah R."/>
            <person name="Rodriguez M."/>
            <person name="Hoon See L."/>
            <person name="Vil D."/>
            <person name="Baker J."/>
            <person name="Kirchoff K."/>
            <person name="Toth K."/>
            <person name="King L."/>
            <person name="Bahret A."/>
            <person name="Miller B."/>
            <person name="Marra M.A."/>
            <person name="Martienssen R."/>
            <person name="McCombie W.R."/>
            <person name="Wilson R.K."/>
            <person name="Murphy G."/>
            <person name="Bancroft I."/>
            <person name="Volckaert G."/>
            <person name="Wambutt R."/>
            <person name="Duesterhoeft A."/>
            <person name="Stiekema W."/>
            <person name="Pohl T."/>
            <person name="Entian K.-D."/>
            <person name="Terryn N."/>
            <person name="Hartley N."/>
            <person name="Bent E."/>
            <person name="Johnson S."/>
            <person name="Langham S.-A."/>
            <person name="McCullagh B."/>
            <person name="Robben J."/>
            <person name="Grymonprez B."/>
            <person name="Zimmermann W."/>
            <person name="Ramsperger U."/>
            <person name="Wedler H."/>
            <person name="Balke K."/>
            <person name="Wedler E."/>
            <person name="Peters S."/>
            <person name="van Staveren M."/>
            <person name="Dirkse W."/>
            <person name="Mooijman P."/>
            <person name="Klein Lankhorst R."/>
            <person name="Weitzenegger T."/>
            <person name="Bothe G."/>
            <person name="Rose M."/>
            <person name="Hauf J."/>
            <person name="Berneiser S."/>
            <person name="Hempel S."/>
            <person name="Feldpausch M."/>
            <person name="Lamberth S."/>
            <person name="Villarroel R."/>
            <person name="Gielen J."/>
            <person name="Ardiles W."/>
            <person name="Bents O."/>
            <person name="Lemcke K."/>
            <person name="Kolesov G."/>
            <person name="Mayer K.F.X."/>
            <person name="Rudd S."/>
            <person name="Schoof H."/>
            <person name="Schueller C."/>
            <person name="Zaccaria P."/>
            <person name="Mewes H.-W."/>
            <person name="Bevan M."/>
            <person name="Fransz P.F."/>
        </authorList>
    </citation>
    <scope>NUCLEOTIDE SEQUENCE [LARGE SCALE GENOMIC DNA]</scope>
    <source>
        <strain>cv. Columbia</strain>
    </source>
</reference>
<reference key="2">
    <citation type="journal article" date="2017" name="Plant J.">
        <title>Araport11: a complete reannotation of the Arabidopsis thaliana reference genome.</title>
        <authorList>
            <person name="Cheng C.Y."/>
            <person name="Krishnakumar V."/>
            <person name="Chan A.P."/>
            <person name="Thibaud-Nissen F."/>
            <person name="Schobel S."/>
            <person name="Town C.D."/>
        </authorList>
    </citation>
    <scope>GENOME REANNOTATION</scope>
    <source>
        <strain>cv. Columbia</strain>
    </source>
</reference>
<reference key="3">
    <citation type="submission" date="2004-03" db="EMBL/GenBank/DDBJ databases">
        <authorList>
            <person name="Wrobel R.L."/>
            <person name="Kimball T.L."/>
            <person name="Steffen E."/>
            <person name="Thao S."/>
            <person name="Aceti D.J."/>
            <person name="Blommel P.G."/>
            <person name="Newman C.S."/>
            <person name="Zhao Q."/>
            <person name="Fox B.G."/>
            <person name="Phillips G.N. Jr."/>
            <person name="Markley J.L."/>
        </authorList>
    </citation>
    <scope>NUCLEOTIDE SEQUENCE [LARGE SCALE MRNA] OF 2-216</scope>
</reference>
<reference key="4">
    <citation type="journal article" date="2004" name="Plant J.">
        <title>Molecular dissection of plant cytokinesis and phragmoplast structure: a survey of GFP-tagged proteins.</title>
        <authorList>
            <person name="Van Damme D."/>
            <person name="Bouget F.-Y."/>
            <person name="Van Poucke K."/>
            <person name="Inze D."/>
            <person name="Geelen D."/>
        </authorList>
    </citation>
    <scope>SUBCELLULAR LOCATION</scope>
</reference>
<reference key="5">
    <citation type="journal article" date="2007" name="Evol. Bioinform. Online">
        <title>Characterization and evolution of the cell cycle-associated mob domain-containing proteins in eukaryotes.</title>
        <authorList>
            <person name="Vitulo N."/>
            <person name="Vezzi A."/>
            <person name="Galla G."/>
            <person name="Citterio S."/>
            <person name="Marino G."/>
            <person name="Ruperti B."/>
            <person name="Zermiani M."/>
            <person name="Albertini E."/>
            <person name="Valle G."/>
            <person name="Barcaccia G."/>
        </authorList>
    </citation>
    <scope>GENE FAMILY</scope>
    <scope>NOMENCLATURE</scope>
</reference>
<accession>F4K495</accession>
<protein>
    <recommendedName>
        <fullName>MOB kinase activator-like 2A</fullName>
    </recommendedName>
    <alternativeName>
        <fullName>Mob1 homolog 2A</fullName>
    </alternativeName>
    <alternativeName>
        <fullName>Mps one binder kinase activator-like 2A</fullName>
    </alternativeName>
</protein>
<proteinExistence type="evidence at transcript level"/>
<keyword id="KW-0479">Metal-binding</keyword>
<keyword id="KW-0539">Nucleus</keyword>
<keyword id="KW-1185">Reference proteome</keyword>
<keyword id="KW-0862">Zinc</keyword>
<comment type="subcellular location">
    <subcellularLocation>
        <location evidence="2">Nucleus</location>
    </subcellularLocation>
</comment>
<comment type="similarity">
    <text evidence="4">Belongs to the MOB1/phocein family.</text>
</comment>
<gene>
    <name evidence="3" type="primary">MOB2A</name>
    <name evidence="5" type="ordered locus">At5g20440</name>
    <name evidence="6" type="ORF">F7C8.30</name>
</gene>
<organism>
    <name type="scientific">Arabidopsis thaliana</name>
    <name type="common">Mouse-ear cress</name>
    <dbReference type="NCBI Taxonomy" id="3702"/>
    <lineage>
        <taxon>Eukaryota</taxon>
        <taxon>Viridiplantae</taxon>
        <taxon>Streptophyta</taxon>
        <taxon>Embryophyta</taxon>
        <taxon>Tracheophyta</taxon>
        <taxon>Spermatophyta</taxon>
        <taxon>Magnoliopsida</taxon>
        <taxon>eudicotyledons</taxon>
        <taxon>Gunneridae</taxon>
        <taxon>Pentapetalae</taxon>
        <taxon>rosids</taxon>
        <taxon>malvids</taxon>
        <taxon>Brassicales</taxon>
        <taxon>Brassicaceae</taxon>
        <taxon>Camelineae</taxon>
        <taxon>Arabidopsis</taxon>
    </lineage>
</organism>
<evidence type="ECO:0000250" key="1">
    <source>
        <dbReference type="UniProtKB" id="P40484"/>
    </source>
</evidence>
<evidence type="ECO:0000269" key="2">
    <source>
    </source>
</evidence>
<evidence type="ECO:0000303" key="3">
    <source>
    </source>
</evidence>
<evidence type="ECO:0000305" key="4"/>
<evidence type="ECO:0000312" key="5">
    <source>
        <dbReference type="Araport" id="AT5G20440"/>
    </source>
</evidence>
<evidence type="ECO:0000312" key="6">
    <source>
        <dbReference type="EMBL" id="AF296833"/>
    </source>
</evidence>